<feature type="chain" id="PRO_0000227984" description="Maspardin">
    <location>
        <begin position="1"/>
        <end position="261"/>
    </location>
</feature>
<feature type="domain" description="AB hydrolase-1" evidence="3">
    <location>
        <begin position="87"/>
        <end position="159"/>
    </location>
</feature>
<feature type="modified residue" description="Phosphoserine" evidence="2">
    <location>
        <position position="257"/>
    </location>
</feature>
<gene>
    <name type="primary">Spg21</name>
</gene>
<sequence>MGEIKVSPDYNWFRSTVPLKKIIVDDDDSKIWSLYDAGPRSIRCPLIFLPPVSGTADVFFQQILALTGWGYRVIALQYPVYWDHLEFCDGFRKLLDHLQLDKVHLFGASLGGFLAQKFAEYTHKSPRVHSLILCNAFSDTSIFNQTWTANSFWLMPAFMLKKIVLGNFSSGPVDPMMADAIDFMVDRLESLGQSELASRLTLNCQNSYVEPHKIRDIPVTIMDIHLLQFHGTKYAAIDPSVVSAEELDVQKGQLDLSQEEP</sequence>
<organism>
    <name type="scientific">Rattus norvegicus</name>
    <name type="common">Rat</name>
    <dbReference type="NCBI Taxonomy" id="10116"/>
    <lineage>
        <taxon>Eukaryota</taxon>
        <taxon>Metazoa</taxon>
        <taxon>Chordata</taxon>
        <taxon>Craniata</taxon>
        <taxon>Vertebrata</taxon>
        <taxon>Euteleostomi</taxon>
        <taxon>Mammalia</taxon>
        <taxon>Eutheria</taxon>
        <taxon>Euarchontoglires</taxon>
        <taxon>Glires</taxon>
        <taxon>Rodentia</taxon>
        <taxon>Myomorpha</taxon>
        <taxon>Muroidea</taxon>
        <taxon>Muridae</taxon>
        <taxon>Murinae</taxon>
        <taxon>Rattus</taxon>
    </lineage>
</organism>
<accession>Q5XIC4</accession>
<name>SPG21_RAT</name>
<comment type="function">
    <text evidence="1">May play a role as a negative regulatory factor in CD4-dependent T-cell activation.</text>
</comment>
<comment type="subunit">
    <text evidence="1">Interacts with CD4. Interacts with ALDH16A1.</text>
</comment>
<comment type="subcellular location">
    <subcellularLocation>
        <location evidence="1">Cytoplasm</location>
    </subcellularLocation>
</comment>
<comment type="similarity">
    <text evidence="4">Belongs to the AB hydrolase superfamily.</text>
</comment>
<reference key="1">
    <citation type="journal article" date="2004" name="Genome Res.">
        <title>The status, quality, and expansion of the NIH full-length cDNA project: the Mammalian Gene Collection (MGC).</title>
        <authorList>
            <consortium name="The MGC Project Team"/>
        </authorList>
    </citation>
    <scope>NUCLEOTIDE SEQUENCE [LARGE SCALE MRNA]</scope>
    <source>
        <tissue>Heart</tissue>
    </source>
</reference>
<keyword id="KW-0963">Cytoplasm</keyword>
<keyword id="KW-0597">Phosphoprotein</keyword>
<keyword id="KW-1185">Reference proteome</keyword>
<dbReference type="EMBL" id="BC083760">
    <property type="protein sequence ID" value="AAH83760.1"/>
    <property type="molecule type" value="mRNA"/>
</dbReference>
<dbReference type="RefSeq" id="NP_001006988.1">
    <property type="nucleotide sequence ID" value="NM_001006987.3"/>
</dbReference>
<dbReference type="SMR" id="Q5XIC4"/>
<dbReference type="FunCoup" id="Q5XIC4">
    <property type="interactions" value="1843"/>
</dbReference>
<dbReference type="STRING" id="10116.ENSRNOP00000069701"/>
<dbReference type="ESTHER" id="ratno-SPG21">
    <property type="family name" value="Maspardin-ACP33-SPG21_like"/>
</dbReference>
<dbReference type="iPTMnet" id="Q5XIC4"/>
<dbReference type="PhosphoSitePlus" id="Q5XIC4"/>
<dbReference type="jPOST" id="Q5XIC4"/>
<dbReference type="PaxDb" id="10116-ENSRNOP00000039361"/>
<dbReference type="DNASU" id="300791"/>
<dbReference type="Ensembl" id="ENSRNOT00000051504.4">
    <property type="protein sequence ID" value="ENSRNOP00000039361.2"/>
    <property type="gene ID" value="ENSRNOG00000015019.7"/>
</dbReference>
<dbReference type="GeneID" id="300791"/>
<dbReference type="KEGG" id="rno:300791"/>
<dbReference type="UCSC" id="RGD:1359141">
    <property type="organism name" value="rat"/>
</dbReference>
<dbReference type="AGR" id="RGD:1359141"/>
<dbReference type="CTD" id="51324"/>
<dbReference type="RGD" id="1359141">
    <property type="gene designation" value="Spg21"/>
</dbReference>
<dbReference type="eggNOG" id="ENOG502QPSD">
    <property type="taxonomic scope" value="Eukaryota"/>
</dbReference>
<dbReference type="GeneTree" id="ENSGT00390000007857"/>
<dbReference type="InParanoid" id="Q5XIC4"/>
<dbReference type="PRO" id="PR:Q5XIC4"/>
<dbReference type="Proteomes" id="UP000002494">
    <property type="component" value="Chromosome 8"/>
</dbReference>
<dbReference type="Bgee" id="ENSRNOG00000015019">
    <property type="expression patterns" value="Expressed in lung and 19 other cell types or tissues"/>
</dbReference>
<dbReference type="ExpressionAtlas" id="Q5XIC4">
    <property type="expression patterns" value="baseline and differential"/>
</dbReference>
<dbReference type="GO" id="GO:0005829">
    <property type="term" value="C:cytosol"/>
    <property type="evidence" value="ECO:0000250"/>
    <property type="project" value="UniProtKB"/>
</dbReference>
<dbReference type="GO" id="GO:0030140">
    <property type="term" value="C:trans-Golgi network transport vesicle"/>
    <property type="evidence" value="ECO:0000250"/>
    <property type="project" value="UniProtKB"/>
</dbReference>
<dbReference type="GO" id="GO:0042609">
    <property type="term" value="F:CD4 receptor binding"/>
    <property type="evidence" value="ECO:0000250"/>
    <property type="project" value="UniProtKB"/>
</dbReference>
<dbReference type="GO" id="GO:0048668">
    <property type="term" value="P:collateral sprouting"/>
    <property type="evidence" value="ECO:0000266"/>
    <property type="project" value="RGD"/>
</dbReference>
<dbReference type="GO" id="GO:0007173">
    <property type="term" value="P:epidermal growth factor receptor signaling pathway"/>
    <property type="evidence" value="ECO:0000266"/>
    <property type="project" value="RGD"/>
</dbReference>
<dbReference type="GO" id="GO:0010467">
    <property type="term" value="P:gene expression"/>
    <property type="evidence" value="ECO:0000266"/>
    <property type="project" value="RGD"/>
</dbReference>
<dbReference type="GO" id="GO:0060173">
    <property type="term" value="P:limb development"/>
    <property type="evidence" value="ECO:0000266"/>
    <property type="project" value="RGD"/>
</dbReference>
<dbReference type="GO" id="GO:0007626">
    <property type="term" value="P:locomotory behavior"/>
    <property type="evidence" value="ECO:0000266"/>
    <property type="project" value="RGD"/>
</dbReference>
<dbReference type="GO" id="GO:0050905">
    <property type="term" value="P:neuromuscular process"/>
    <property type="evidence" value="ECO:0000266"/>
    <property type="project" value="RGD"/>
</dbReference>
<dbReference type="GO" id="GO:0042551">
    <property type="term" value="P:neuron maturation"/>
    <property type="evidence" value="ECO:0000266"/>
    <property type="project" value="RGD"/>
</dbReference>
<dbReference type="GO" id="GO:0070849">
    <property type="term" value="P:response to epidermal growth factor"/>
    <property type="evidence" value="ECO:0000266"/>
    <property type="project" value="RGD"/>
</dbReference>
<dbReference type="FunFam" id="3.40.50.1820:FF:000040">
    <property type="entry name" value="SPG21, maspardin"/>
    <property type="match status" value="1"/>
</dbReference>
<dbReference type="Gene3D" id="3.40.50.1820">
    <property type="entry name" value="alpha/beta hydrolase"/>
    <property type="match status" value="1"/>
</dbReference>
<dbReference type="InterPro" id="IPR000073">
    <property type="entry name" value="AB_hydrolase_1"/>
</dbReference>
<dbReference type="InterPro" id="IPR029058">
    <property type="entry name" value="AB_hydrolase_fold"/>
</dbReference>
<dbReference type="InterPro" id="IPR026151">
    <property type="entry name" value="Maspardin"/>
</dbReference>
<dbReference type="PANTHER" id="PTHR15913">
    <property type="entry name" value="ACID CLUSTER PROTEIN 33"/>
    <property type="match status" value="1"/>
</dbReference>
<dbReference type="PANTHER" id="PTHR15913:SF0">
    <property type="entry name" value="MASPARDIN"/>
    <property type="match status" value="1"/>
</dbReference>
<dbReference type="Pfam" id="PF00561">
    <property type="entry name" value="Abhydrolase_1"/>
    <property type="match status" value="1"/>
</dbReference>
<dbReference type="SUPFAM" id="SSF53474">
    <property type="entry name" value="alpha/beta-Hydrolases"/>
    <property type="match status" value="1"/>
</dbReference>
<protein>
    <recommendedName>
        <fullName>Maspardin</fullName>
    </recommendedName>
    <alternativeName>
        <fullName>Spastic paraplegia 21 autosomal recessive Mast syndrome protein homolog</fullName>
    </alternativeName>
</protein>
<evidence type="ECO:0000250" key="1"/>
<evidence type="ECO:0000250" key="2">
    <source>
        <dbReference type="UniProtKB" id="Q9NZD8"/>
    </source>
</evidence>
<evidence type="ECO:0000255" key="3"/>
<evidence type="ECO:0000305" key="4"/>
<proteinExistence type="evidence at transcript level"/>